<gene>
    <name type="primary">arg2</name>
    <name type="ORF">ACLA_070450</name>
</gene>
<sequence>MNPNAVWPRTAQSSLKKHQVSLCTCQRRSHYRLRSFSTFADRKIHQSAGFSSSSKNHDRLSHRAREKLLDREFFLSLLSSASTQREAKSYLARLKAQHQPDLPQKPTSAPASTAKIPPLPSGVNLGSFYGASRSVYETPVFRQGPTPTPRQDQPERLHLALVKLSIPQTLDDTIIDGVAKTLAQLDRLGLTCCVMIDPGAAEDARLLRTLATEQADRLAIAIHKQPDSKSLRLDSVLSVDPATPHLPKVLSRKALLKPLRDGHTVILTPIAYTEDVPRAVMVSADDAVLALTRELAGLATFPDPDEDPLTTAERIGRLQKEVSLDRVILLHPLGGIPAFNWRQSSHVFINMEQEYDDIENELLQARDVISAGDANLTASDILQHPSSVAVSNPLSKFVHKEIVPLPPARSLSPMVPEAQRSAVEGHLENLRLSQKALAMLPSASSGIITSPIEVANSAKTDQPSDLSVVGTRRQRNPLIHNLLTDKPLLSSSLPMSRRGPIISAQGILNPVTSHTTFVKRGMPLTILPNPWVKPWSAQRQPRLRLDDPSIDLPRLVHLIEDSFNRKLDVQDYLNRVNDRLAGLIIAGEYEGGAILTWELPPGVQDDGSAENSARMVPYLDKFAVLKRSQGAGGVADIVFNAMVRTCFPNGVCWRSRKNNPVNKWYFERSLGTWKLSDTNWTMFWTTPGLVEDSQKFRDYEAVCRSIQPSWAEDTGVVD</sequence>
<protein>
    <recommendedName>
        <fullName>Amino-acid acetyltransferase, mitochondrial</fullName>
        <ecNumber>2.3.1.1</ecNumber>
    </recommendedName>
    <alternativeName>
        <fullName>Arginine-requiring protein 2</fullName>
    </alternativeName>
    <alternativeName>
        <fullName>Glutamate N-acetyltransferase</fullName>
    </alternativeName>
    <alternativeName>
        <fullName>N-acetylglutamate synthase</fullName>
        <shortName>AGS</shortName>
        <shortName>NAGS</shortName>
    </alternativeName>
</protein>
<evidence type="ECO:0000250" key="1"/>
<evidence type="ECO:0000255" key="2"/>
<evidence type="ECO:0000255" key="3">
    <source>
        <dbReference type="PROSITE-ProRule" id="PRU00532"/>
    </source>
</evidence>
<evidence type="ECO:0000256" key="4">
    <source>
        <dbReference type="SAM" id="MobiDB-lite"/>
    </source>
</evidence>
<evidence type="ECO:0000305" key="5"/>
<comment type="function">
    <text evidence="1">N-acetylglutamate synthase involved in arginine biosynthesis.</text>
</comment>
<comment type="catalytic activity">
    <reaction>
        <text>L-glutamate + acetyl-CoA = N-acetyl-L-glutamate + CoA + H(+)</text>
        <dbReference type="Rhea" id="RHEA:24292"/>
        <dbReference type="ChEBI" id="CHEBI:15378"/>
        <dbReference type="ChEBI" id="CHEBI:29985"/>
        <dbReference type="ChEBI" id="CHEBI:44337"/>
        <dbReference type="ChEBI" id="CHEBI:57287"/>
        <dbReference type="ChEBI" id="CHEBI:57288"/>
        <dbReference type="EC" id="2.3.1.1"/>
    </reaction>
</comment>
<comment type="pathway">
    <text>Amino-acid biosynthesis; L-arginine biosynthesis; N(2)-acetyl-L-ornithine from L-glutamate: step 1/4.</text>
</comment>
<comment type="subcellular location">
    <subcellularLocation>
        <location evidence="1">Mitochondrion</location>
    </subcellularLocation>
</comment>
<comment type="similarity">
    <text evidence="5">Belongs to the acetyltransferase family.</text>
</comment>
<keyword id="KW-0012">Acyltransferase</keyword>
<keyword id="KW-0028">Amino-acid biosynthesis</keyword>
<keyword id="KW-0496">Mitochondrion</keyword>
<keyword id="KW-1185">Reference proteome</keyword>
<keyword id="KW-0808">Transferase</keyword>
<keyword id="KW-0809">Transit peptide</keyword>
<organism>
    <name type="scientific">Aspergillus clavatus (strain ATCC 1007 / CBS 513.65 / DSM 816 / NCTC 3887 / NRRL 1 / QM 1276 / 107)</name>
    <dbReference type="NCBI Taxonomy" id="344612"/>
    <lineage>
        <taxon>Eukaryota</taxon>
        <taxon>Fungi</taxon>
        <taxon>Dikarya</taxon>
        <taxon>Ascomycota</taxon>
        <taxon>Pezizomycotina</taxon>
        <taxon>Eurotiomycetes</taxon>
        <taxon>Eurotiomycetidae</taxon>
        <taxon>Eurotiales</taxon>
        <taxon>Aspergillaceae</taxon>
        <taxon>Aspergillus</taxon>
        <taxon>Aspergillus subgen. Fumigati</taxon>
    </lineage>
</organism>
<dbReference type="EC" id="2.3.1.1"/>
<dbReference type="EMBL" id="DS027045">
    <property type="protein sequence ID" value="EAW14013.1"/>
    <property type="molecule type" value="Genomic_DNA"/>
</dbReference>
<dbReference type="RefSeq" id="XP_001275439.1">
    <property type="nucleotide sequence ID" value="XM_001275438.1"/>
</dbReference>
<dbReference type="STRING" id="344612.A1C6J2"/>
<dbReference type="EnsemblFungi" id="EAW14013">
    <property type="protein sequence ID" value="EAW14013"/>
    <property type="gene ID" value="ACLA_070450"/>
</dbReference>
<dbReference type="GeneID" id="4707512"/>
<dbReference type="KEGG" id="act:ACLA_070450"/>
<dbReference type="VEuPathDB" id="FungiDB:ACLA_070450"/>
<dbReference type="eggNOG" id="KOG2436">
    <property type="taxonomic scope" value="Eukaryota"/>
</dbReference>
<dbReference type="HOGENOM" id="CLU_013088_0_0_1"/>
<dbReference type="OMA" id="NAMVRDC"/>
<dbReference type="OrthoDB" id="5585968at2759"/>
<dbReference type="UniPathway" id="UPA00068">
    <property type="reaction ID" value="UER00106"/>
</dbReference>
<dbReference type="Proteomes" id="UP000006701">
    <property type="component" value="Unassembled WGS sequence"/>
</dbReference>
<dbReference type="GO" id="GO:0005759">
    <property type="term" value="C:mitochondrial matrix"/>
    <property type="evidence" value="ECO:0007669"/>
    <property type="project" value="TreeGrafter"/>
</dbReference>
<dbReference type="GO" id="GO:0004042">
    <property type="term" value="F:L-glutamate N-acetyltransferase activity"/>
    <property type="evidence" value="ECO:0007669"/>
    <property type="project" value="InterPro"/>
</dbReference>
<dbReference type="GO" id="GO:0006526">
    <property type="term" value="P:L-arginine biosynthetic process"/>
    <property type="evidence" value="ECO:0007669"/>
    <property type="project" value="UniProtKB-UniPathway"/>
</dbReference>
<dbReference type="GO" id="GO:0006592">
    <property type="term" value="P:ornithine biosynthetic process"/>
    <property type="evidence" value="ECO:0007669"/>
    <property type="project" value="TreeGrafter"/>
</dbReference>
<dbReference type="FunFam" id="3.40.630.30:FF:000049">
    <property type="entry name" value="Amino-acid acetyltransferase, mitochondrial"/>
    <property type="match status" value="1"/>
</dbReference>
<dbReference type="Gene3D" id="3.40.630.30">
    <property type="match status" value="1"/>
</dbReference>
<dbReference type="InterPro" id="IPR011190">
    <property type="entry name" value="GlcNAc_Synth_fun"/>
</dbReference>
<dbReference type="InterPro" id="IPR006855">
    <property type="entry name" value="Vertebrate-like_GNAT_dom"/>
</dbReference>
<dbReference type="PANTHER" id="PTHR23342:SF4">
    <property type="entry name" value="AMINO-ACID ACETYLTRANSFERASE, MITOCHONDRIAL"/>
    <property type="match status" value="1"/>
</dbReference>
<dbReference type="PANTHER" id="PTHR23342">
    <property type="entry name" value="N-ACETYLGLUTAMATE SYNTHASE"/>
    <property type="match status" value="1"/>
</dbReference>
<dbReference type="Pfam" id="PF04768">
    <property type="entry name" value="NAT"/>
    <property type="match status" value="1"/>
</dbReference>
<dbReference type="PIRSF" id="PIRSF007892">
    <property type="entry name" value="NAGS_fungal"/>
    <property type="match status" value="1"/>
</dbReference>
<dbReference type="PROSITE" id="PS51731">
    <property type="entry name" value="GNAT_NAGS"/>
    <property type="match status" value="1"/>
</dbReference>
<reference key="1">
    <citation type="journal article" date="2008" name="PLoS Genet.">
        <title>Genomic islands in the pathogenic filamentous fungus Aspergillus fumigatus.</title>
        <authorList>
            <person name="Fedorova N.D."/>
            <person name="Khaldi N."/>
            <person name="Joardar V.S."/>
            <person name="Maiti R."/>
            <person name="Amedeo P."/>
            <person name="Anderson M.J."/>
            <person name="Crabtree J."/>
            <person name="Silva J.C."/>
            <person name="Badger J.H."/>
            <person name="Albarraq A."/>
            <person name="Angiuoli S."/>
            <person name="Bussey H."/>
            <person name="Bowyer P."/>
            <person name="Cotty P.J."/>
            <person name="Dyer P.S."/>
            <person name="Egan A."/>
            <person name="Galens K."/>
            <person name="Fraser-Liggett C.M."/>
            <person name="Haas B.J."/>
            <person name="Inman J.M."/>
            <person name="Kent R."/>
            <person name="Lemieux S."/>
            <person name="Malavazi I."/>
            <person name="Orvis J."/>
            <person name="Roemer T."/>
            <person name="Ronning C.M."/>
            <person name="Sundaram J.P."/>
            <person name="Sutton G."/>
            <person name="Turner G."/>
            <person name="Venter J.C."/>
            <person name="White O.R."/>
            <person name="Whitty B.R."/>
            <person name="Youngman P."/>
            <person name="Wolfe K.H."/>
            <person name="Goldman G.H."/>
            <person name="Wortman J.R."/>
            <person name="Jiang B."/>
            <person name="Denning D.W."/>
            <person name="Nierman W.C."/>
        </authorList>
    </citation>
    <scope>NUCLEOTIDE SEQUENCE [LARGE SCALE GENOMIC DNA]</scope>
    <source>
        <strain>ATCC 1007 / CBS 513.65 / DSM 816 / NCTC 3887 / NRRL 1 / QM 1276 / 107</strain>
    </source>
</reference>
<accession>A1C6J2</accession>
<proteinExistence type="inferred from homology"/>
<name>NAGS_ASPCL</name>
<feature type="transit peptide" description="Mitochondrion" evidence="2">
    <location>
        <begin position="1"/>
        <end position="36"/>
    </location>
</feature>
<feature type="chain" id="PRO_0000372549" description="Amino-acid acetyltransferase, mitochondrial">
    <location>
        <begin position="37"/>
        <end position="718"/>
    </location>
</feature>
<feature type="domain" description="N-acetyltransferase" evidence="3">
    <location>
        <begin position="539"/>
        <end position="708"/>
    </location>
</feature>
<feature type="region of interest" description="Disordered" evidence="4">
    <location>
        <begin position="97"/>
        <end position="116"/>
    </location>
</feature>